<organism>
    <name type="scientific">Phaeosphaeria nodorum (strain SN15 / ATCC MYA-4574 / FGSC 10173)</name>
    <name type="common">Glume blotch fungus</name>
    <name type="synonym">Parastagonospora nodorum</name>
    <dbReference type="NCBI Taxonomy" id="321614"/>
    <lineage>
        <taxon>Eukaryota</taxon>
        <taxon>Fungi</taxon>
        <taxon>Dikarya</taxon>
        <taxon>Ascomycota</taxon>
        <taxon>Pezizomycotina</taxon>
        <taxon>Dothideomycetes</taxon>
        <taxon>Pleosporomycetidae</taxon>
        <taxon>Pleosporales</taxon>
        <taxon>Pleosporineae</taxon>
        <taxon>Phaeosphaeriaceae</taxon>
        <taxon>Parastagonospora</taxon>
    </lineage>
</organism>
<feature type="chain" id="PRO_0000365682" description="Adenylate kinase">
    <location>
        <begin position="1"/>
        <end position="277"/>
    </location>
</feature>
<feature type="region of interest" description="NMP" evidence="1">
    <location>
        <begin position="73"/>
        <end position="102"/>
    </location>
</feature>
<feature type="region of interest" description="LID" evidence="1">
    <location>
        <begin position="170"/>
        <end position="207"/>
    </location>
</feature>
<feature type="binding site" evidence="1">
    <location>
        <begin position="53"/>
        <end position="58"/>
    </location>
    <ligand>
        <name>ATP</name>
        <dbReference type="ChEBI" id="CHEBI:30616"/>
    </ligand>
</feature>
<feature type="binding site" evidence="1">
    <location>
        <position position="74"/>
    </location>
    <ligand>
        <name>AMP</name>
        <dbReference type="ChEBI" id="CHEBI:456215"/>
    </ligand>
</feature>
<feature type="binding site" evidence="1">
    <location>
        <position position="79"/>
    </location>
    <ligand>
        <name>AMP</name>
        <dbReference type="ChEBI" id="CHEBI:456215"/>
    </ligand>
</feature>
<feature type="binding site" evidence="1">
    <location>
        <begin position="100"/>
        <end position="102"/>
    </location>
    <ligand>
        <name>AMP</name>
        <dbReference type="ChEBI" id="CHEBI:456215"/>
    </ligand>
</feature>
<feature type="binding site" evidence="1">
    <location>
        <begin position="129"/>
        <end position="132"/>
    </location>
    <ligand>
        <name>AMP</name>
        <dbReference type="ChEBI" id="CHEBI:456215"/>
    </ligand>
</feature>
<feature type="binding site" evidence="1">
    <location>
        <position position="136"/>
    </location>
    <ligand>
        <name>AMP</name>
        <dbReference type="ChEBI" id="CHEBI:456215"/>
    </ligand>
</feature>
<feature type="binding site" evidence="1">
    <location>
        <position position="171"/>
    </location>
    <ligand>
        <name>ATP</name>
        <dbReference type="ChEBI" id="CHEBI:30616"/>
    </ligand>
</feature>
<feature type="binding site" evidence="1">
    <location>
        <begin position="180"/>
        <end position="181"/>
    </location>
    <ligand>
        <name>ATP</name>
        <dbReference type="ChEBI" id="CHEBI:30616"/>
    </ligand>
</feature>
<feature type="binding site" evidence="1">
    <location>
        <position position="204"/>
    </location>
    <ligand>
        <name>AMP</name>
        <dbReference type="ChEBI" id="CHEBI:456215"/>
    </ligand>
</feature>
<feature type="binding site" evidence="1">
    <location>
        <position position="215"/>
    </location>
    <ligand>
        <name>AMP</name>
        <dbReference type="ChEBI" id="CHEBI:456215"/>
    </ligand>
</feature>
<feature type="binding site" evidence="1">
    <location>
        <position position="243"/>
    </location>
    <ligand>
        <name>ATP</name>
        <dbReference type="ChEBI" id="CHEBI:30616"/>
    </ligand>
</feature>
<name>KAD2_PHANO</name>
<dbReference type="EC" id="2.7.4.3" evidence="1"/>
<dbReference type="EMBL" id="CH445326">
    <property type="protein sequence ID" value="EAT91128.1"/>
    <property type="molecule type" value="Genomic_DNA"/>
</dbReference>
<dbReference type="RefSeq" id="XP_001792117.1">
    <property type="nucleotide sequence ID" value="XM_001792065.1"/>
</dbReference>
<dbReference type="SMR" id="Q0V3D5"/>
<dbReference type="FunCoup" id="Q0V3D5">
    <property type="interactions" value="766"/>
</dbReference>
<dbReference type="STRING" id="321614.Q0V3D5"/>
<dbReference type="EnsemblFungi" id="SNOT_01479">
    <property type="protein sequence ID" value="SNOT_01479"/>
    <property type="gene ID" value="SNOG_01479"/>
</dbReference>
<dbReference type="GeneID" id="5968962"/>
<dbReference type="KEGG" id="pno:SNOG_01479"/>
<dbReference type="VEuPathDB" id="FungiDB:JI435_014790"/>
<dbReference type="eggNOG" id="KOG3078">
    <property type="taxonomic scope" value="Eukaryota"/>
</dbReference>
<dbReference type="HOGENOM" id="CLU_032354_1_0_1"/>
<dbReference type="InParanoid" id="Q0V3D5"/>
<dbReference type="OMA" id="VYHEQTA"/>
<dbReference type="OrthoDB" id="439792at2759"/>
<dbReference type="Proteomes" id="UP000001055">
    <property type="component" value="Unassembled WGS sequence"/>
</dbReference>
<dbReference type="GO" id="GO:0005737">
    <property type="term" value="C:cytoplasm"/>
    <property type="evidence" value="ECO:0000318"/>
    <property type="project" value="GO_Central"/>
</dbReference>
<dbReference type="GO" id="GO:0005829">
    <property type="term" value="C:cytosol"/>
    <property type="evidence" value="ECO:0007669"/>
    <property type="project" value="UniProtKB-SubCell"/>
</dbReference>
<dbReference type="GO" id="GO:0005758">
    <property type="term" value="C:mitochondrial intermembrane space"/>
    <property type="evidence" value="ECO:0007669"/>
    <property type="project" value="UniProtKB-SubCell"/>
</dbReference>
<dbReference type="GO" id="GO:0005739">
    <property type="term" value="C:mitochondrion"/>
    <property type="evidence" value="ECO:0000318"/>
    <property type="project" value="GO_Central"/>
</dbReference>
<dbReference type="GO" id="GO:0004017">
    <property type="term" value="F:adenylate kinase activity"/>
    <property type="evidence" value="ECO:0000318"/>
    <property type="project" value="GO_Central"/>
</dbReference>
<dbReference type="GO" id="GO:0016208">
    <property type="term" value="F:AMP binding"/>
    <property type="evidence" value="ECO:0007669"/>
    <property type="project" value="EnsemblFungi"/>
</dbReference>
<dbReference type="GO" id="GO:0005524">
    <property type="term" value="F:ATP binding"/>
    <property type="evidence" value="ECO:0007669"/>
    <property type="project" value="UniProtKB-KW"/>
</dbReference>
<dbReference type="GO" id="GO:0003688">
    <property type="term" value="F:DNA replication origin binding"/>
    <property type="evidence" value="ECO:0007669"/>
    <property type="project" value="EnsemblFungi"/>
</dbReference>
<dbReference type="GO" id="GO:0006172">
    <property type="term" value="P:ADP biosynthetic process"/>
    <property type="evidence" value="ECO:0000318"/>
    <property type="project" value="GO_Central"/>
</dbReference>
<dbReference type="GO" id="GO:0046033">
    <property type="term" value="P:AMP metabolic process"/>
    <property type="evidence" value="ECO:0007669"/>
    <property type="project" value="UniProtKB-UniRule"/>
</dbReference>
<dbReference type="GO" id="GO:0046034">
    <property type="term" value="P:ATP metabolic process"/>
    <property type="evidence" value="ECO:0007669"/>
    <property type="project" value="UniProtKB-UniRule"/>
</dbReference>
<dbReference type="GO" id="GO:0006270">
    <property type="term" value="P:DNA replication initiation"/>
    <property type="evidence" value="ECO:0007669"/>
    <property type="project" value="EnsemblFungi"/>
</dbReference>
<dbReference type="GO" id="GO:0036388">
    <property type="term" value="P:pre-replicative complex assembly"/>
    <property type="evidence" value="ECO:0007669"/>
    <property type="project" value="EnsemblFungi"/>
</dbReference>
<dbReference type="CDD" id="cd01428">
    <property type="entry name" value="ADK"/>
    <property type="match status" value="1"/>
</dbReference>
<dbReference type="FunFam" id="3.40.50.300:FF:000106">
    <property type="entry name" value="Adenylate kinase mitochondrial"/>
    <property type="match status" value="1"/>
</dbReference>
<dbReference type="Gene3D" id="3.40.50.300">
    <property type="entry name" value="P-loop containing nucleotide triphosphate hydrolases"/>
    <property type="match status" value="1"/>
</dbReference>
<dbReference type="HAMAP" id="MF_00235">
    <property type="entry name" value="Adenylate_kinase_Adk"/>
    <property type="match status" value="1"/>
</dbReference>
<dbReference type="HAMAP" id="MF_03168">
    <property type="entry name" value="Adenylate_kinase_AK2"/>
    <property type="match status" value="1"/>
</dbReference>
<dbReference type="InterPro" id="IPR006259">
    <property type="entry name" value="Adenyl_kin_sub"/>
</dbReference>
<dbReference type="InterPro" id="IPR000850">
    <property type="entry name" value="Adenylat/UMP-CMP_kin"/>
</dbReference>
<dbReference type="InterPro" id="IPR033690">
    <property type="entry name" value="Adenylat_kinase_CS"/>
</dbReference>
<dbReference type="InterPro" id="IPR007862">
    <property type="entry name" value="Adenylate_kinase_lid-dom"/>
</dbReference>
<dbReference type="InterPro" id="IPR028587">
    <property type="entry name" value="AK2"/>
</dbReference>
<dbReference type="InterPro" id="IPR027417">
    <property type="entry name" value="P-loop_NTPase"/>
</dbReference>
<dbReference type="NCBIfam" id="TIGR01351">
    <property type="entry name" value="adk"/>
    <property type="match status" value="1"/>
</dbReference>
<dbReference type="NCBIfam" id="NF001380">
    <property type="entry name" value="PRK00279.1-2"/>
    <property type="match status" value="1"/>
</dbReference>
<dbReference type="NCBIfam" id="NF001381">
    <property type="entry name" value="PRK00279.1-3"/>
    <property type="match status" value="1"/>
</dbReference>
<dbReference type="NCBIfam" id="NF011100">
    <property type="entry name" value="PRK14527.1"/>
    <property type="match status" value="1"/>
</dbReference>
<dbReference type="PANTHER" id="PTHR23359">
    <property type="entry name" value="NUCLEOTIDE KINASE"/>
    <property type="match status" value="1"/>
</dbReference>
<dbReference type="Pfam" id="PF00406">
    <property type="entry name" value="ADK"/>
    <property type="match status" value="1"/>
</dbReference>
<dbReference type="Pfam" id="PF05191">
    <property type="entry name" value="ADK_lid"/>
    <property type="match status" value="1"/>
</dbReference>
<dbReference type="PRINTS" id="PR00094">
    <property type="entry name" value="ADENYLTKNASE"/>
</dbReference>
<dbReference type="SUPFAM" id="SSF52540">
    <property type="entry name" value="P-loop containing nucleoside triphosphate hydrolases"/>
    <property type="match status" value="1"/>
</dbReference>
<dbReference type="PROSITE" id="PS00113">
    <property type="entry name" value="ADENYLATE_KINASE"/>
    <property type="match status" value="1"/>
</dbReference>
<gene>
    <name evidence="1" type="primary">ADK1</name>
    <name type="ORF">SNOG_01479</name>
</gene>
<reference key="1">
    <citation type="journal article" date="2007" name="Plant Cell">
        <title>Dothideomycete-plant interactions illuminated by genome sequencing and EST analysis of the wheat pathogen Stagonospora nodorum.</title>
        <authorList>
            <person name="Hane J.K."/>
            <person name="Lowe R.G.T."/>
            <person name="Solomon P.S."/>
            <person name="Tan K.-C."/>
            <person name="Schoch C.L."/>
            <person name="Spatafora J.W."/>
            <person name="Crous P.W."/>
            <person name="Kodira C.D."/>
            <person name="Birren B.W."/>
            <person name="Galagan J.E."/>
            <person name="Torriani S.F.F."/>
            <person name="McDonald B.A."/>
            <person name="Oliver R.P."/>
        </authorList>
    </citation>
    <scope>NUCLEOTIDE SEQUENCE [LARGE SCALE GENOMIC DNA]</scope>
    <source>
        <strain>SN15 / ATCC MYA-4574 / FGSC 10173</strain>
    </source>
</reference>
<keyword id="KW-0067">ATP-binding</keyword>
<keyword id="KW-0963">Cytoplasm</keyword>
<keyword id="KW-0418">Kinase</keyword>
<keyword id="KW-0496">Mitochondrion</keyword>
<keyword id="KW-0547">Nucleotide-binding</keyword>
<keyword id="KW-0808">Transferase</keyword>
<accession>Q0V3D5</accession>
<comment type="function">
    <text evidence="1">Catalyzes the reversible transfer of the terminal phosphate group between ATP and AMP. Plays an important role in cellular energy homeostasis and in adenine nucleotide metabolism. Adenylate kinase activity is critical for regulation of the phosphate utilization and the AMP de novo biosynthesis pathways.</text>
</comment>
<comment type="catalytic activity">
    <reaction evidence="1">
        <text>AMP + ATP = 2 ADP</text>
        <dbReference type="Rhea" id="RHEA:12973"/>
        <dbReference type="ChEBI" id="CHEBI:30616"/>
        <dbReference type="ChEBI" id="CHEBI:456215"/>
        <dbReference type="ChEBI" id="CHEBI:456216"/>
        <dbReference type="EC" id="2.7.4.3"/>
    </reaction>
</comment>
<comment type="subunit">
    <text evidence="1">Monomer.</text>
</comment>
<comment type="subcellular location">
    <subcellularLocation>
        <location evidence="1">Cytoplasm</location>
        <location evidence="1">Cytosol</location>
    </subcellularLocation>
    <subcellularLocation>
        <location evidence="1">Mitochondrion intermembrane space</location>
    </subcellularLocation>
    <text evidence="1">Predominantly mitochondrial.</text>
</comment>
<comment type="domain">
    <text evidence="1">Consists of three domains, a large central CORE domain and two small peripheral domains, NMPbind and LID, which undergo movements during catalysis. The LID domain closes over the site of phosphoryl transfer upon ATP binding. Assembling and dissambling the active center during each catalytic cycle provides an effective means to prevent ATP hydrolysis.</text>
</comment>
<comment type="similarity">
    <text evidence="1">Belongs to the adenylate kinase family. AK2 subfamily.</text>
</comment>
<proteinExistence type="inferred from homology"/>
<evidence type="ECO:0000255" key="1">
    <source>
        <dbReference type="HAMAP-Rule" id="MF_03168"/>
    </source>
</evidence>
<protein>
    <recommendedName>
        <fullName evidence="1">Adenylate kinase</fullName>
        <ecNumber evidence="1">2.7.4.3</ecNumber>
    </recommendedName>
    <alternativeName>
        <fullName evidence="1">ATP-AMP transphosphorylase</fullName>
    </alternativeName>
    <alternativeName>
        <fullName evidence="1">ATP:AMP phosphotransferase</fullName>
    </alternativeName>
    <alternativeName>
        <fullName evidence="1">Adenylate kinase cytosolic and mitochondrial</fullName>
    </alternativeName>
    <alternativeName>
        <fullName evidence="1">Adenylate monophosphate kinase</fullName>
    </alternativeName>
</protein>
<sequence length="277" mass="30155">MAPTTDPAVNELKSTVHKLEQRIAELEGRLSGHGGGSSSAQESVRMILMGPPGAGKGTQAPRIKEKFCACHLATGDMLRAQVAAKTPLGREAKKIMDAGGLVSDEIMVNMIKTELENNQECAKGFILDGFPRTVTQAEKLDGMLEATQKPLQHAVELQIDDQLLVSRITGRLVHPASGRSYHKIFNPPKAPMTDDATGEPLIQRSDDNEETLKKRLSTYHAQTSPVVAYYQKTGIWKPVDASQDPGQVWKSLLKIFDDKAYVAGRSGSLLNKIGLKN</sequence>